<evidence type="ECO:0000250" key="1">
    <source>
        <dbReference type="UniProtKB" id="Q7Z4L5"/>
    </source>
</evidence>
<evidence type="ECO:0000269" key="2">
    <source>
    </source>
</evidence>
<evidence type="ECO:0000269" key="3">
    <source>
    </source>
</evidence>
<evidence type="ECO:0000303" key="4">
    <source>
    </source>
</evidence>
<evidence type="ECO:0000305" key="5"/>
<comment type="function">
    <text evidence="1 2">Component of the IFT complex A (IFT-A), a complex required for retrograde ciliary transport and entry into cilia of G protein-coupled receptors (GPCRs). Essential for retrograde trafficking of IFT-1, IFT-B and GPCRs (By similarity). Negatively modulates the SHH signal transduction (PubMed:18327258).</text>
</comment>
<comment type="subunit">
    <text evidence="1 3">Component of the IFT complex A (IFT-A) complex. IFT-A complex is divided into a core subcomplex composed of IFT122:IFT140:WDR19 which is associated with TULP3 and a peripheral subcomplex composed of IFT43:WDR35:TTC21B. Interacts directy with WDR35 and TTC21B (By similarity). Interacts with TTC25 (PubMed:25860617).</text>
</comment>
<comment type="subcellular location">
    <subcellularLocation>
        <location evidence="2">Cytoplasm</location>
        <location evidence="2">Cytoskeleton</location>
        <location evidence="2">Cilium axoneme</location>
    </subcellularLocation>
    <text>In polarized epithelial inner medullary collecting ducts cells and in the nodes of mice at 8.0 dpc, colocalizes with alpha-tubulin in cilia. Expressed in a punctate manner throughout the axoneme from the cilia base to the tip.</text>
</comment>
<comment type="developmental stage">
    <text evidence="2">At 10.5 dpc, widely expressed with more intense expression in the maxillary prominence, branchial arches, limb buds, somites and spinal cord.</text>
</comment>
<comment type="similarity">
    <text evidence="5">Belongs to the TTC21 family.</text>
</comment>
<comment type="sequence caution" evidence="5">
    <conflict type="erroneous initiation">
        <sequence resource="EMBL-CDS" id="BAD32598"/>
    </conflict>
    <text>Truncated N-terminus.</text>
</comment>
<comment type="sequence caution" evidence="5">
    <conflict type="miscellaneous discrepancy">
        <sequence resource="EMBL-CDS" id="BAD32598"/>
    </conflict>
    <text>Probable cloning artifact. Aberrant splice sites.</text>
</comment>
<gene>
    <name type="primary">Ttc21b</name>
    <name evidence="4" type="synonym">Ift139</name>
    <name type="synonym">Kiaa1992</name>
    <name type="synonym">Thm1</name>
</gene>
<protein>
    <recommendedName>
        <fullName>Tetratricopeptide repeat protein 21B</fullName>
        <shortName>TPR repeat protein 21B</shortName>
    </recommendedName>
    <alternativeName>
        <fullName>Intraflagellar transport 139 homolog</fullName>
    </alternativeName>
    <alternativeName>
        <fullName>Tetratricopeptide repeat-containing hedgehog modulator 1</fullName>
    </alternativeName>
</protein>
<sequence>MDSQGLKTLINYYCQERYYHHVLLVASEGMKKYSSDPVFRFYHAYGTLMEGKAQEALREFEAIKNKQDVSLCSLMALMYVHKMSPNPDREAILELDTKMKEQRKEAGRKALYHAGLFLWHIGRHDKAREYIDRMSKMPHDSNEGPILKAWLDITRGKEPYAKKALRYFEEGLQDGNDIFALLGKVLCLEIRQNYSGALETVSQIIVNFPSFLPAFEKKMKLQLALQDWDQTVETAQRLLLQDNHNVEALRMLALYYLCREGDVEKAATKLENLGNALDVMEPQNAQLFYKITLAFSRTCGRNQLILQKVQSFLEKAFSLTPQQAEIATELGYQMILQGKVKEAWKWYRTAMTLNESNISAVTGLIRCQLIEGQLQDADQQLEFFSEFQQSMGKSAELMYLHAVLATKKNNRQDEVINLLNDVVNTHFSHLEDLPLGIQYFEKLNPDFLLEVVTEYLNLCPIQPAGPGQPLSPVLRRCSSVLETIIRSVPGLPQAVFLMAKVKYLSGDTEAAYNNLQHCLEHSPSYAEAHLLMAQVYLSQDKVKLCSQSLELCLSYNFNVREYPLYHLIKAQSQKKMGEVAEAIKTLHMAMNLPGMRRSRASSKSKHRTEVDASHRLSIFLELVEVHRLNGEQHEAAKVLQDAIHEFSGTCEELRVTIANADLALAQGDTDRALSMLRNVTTEQPYFIEAKEKMADIYLKHRKEKMLYITCYREIAERMPSPRSFLLLGDAYMNIQEPEEAIVAYEQALNQNPKDGTLARKIGKALVKTHNYSKAITYYEAALKSGQQNCLCYDLAELLLRLKLYEKAEKVLQHSLAHEPVSELSALMVDGRSQVLLAKVYSKMERPSDAIAALQQARELQARILKRVQMEQPDAVPSQKHFAAEICAEIAKHSAAQRDYEKAITFYREALVHCETDSKIMLELAQLYLAQEDLDASLRHCALLLQRDQDNEPATMLMADLMFRKQDYEQAVYHLQQLLDRKPDNFMTLSRLIDLLRRCGKLEDVPRFFLMAEKHNSRTKLEPGFQYCKGLHFWYTGEPNDALRHFNKARKDSDWGQNALYNMIEICLNPDNETIGGEVFENLNGDLGTSPEKQESVQLAVRTAEKLLKELKPQTVQGRLQLRIMENCCLMATKQKSSVEQALNTFTEIAASEKDHIPALLGMATAYMILKQTPKARNQLKRIAKMPWNPIEAEDLEKSWLLLADIYIQSAKYDMAEELLKRCLCHNRSCCKAYEYMGYIMEKEQAYTDAAFNYEMAWKHSNQTNPAVGYKLAFNYLKAKRYVDAIDVCHQVLEAHPTYPKIRKDILDKARASLRP</sequence>
<proteinExistence type="evidence at protein level"/>
<reference key="1">
    <citation type="journal article" date="2008" name="Nat. Genet.">
        <title>THM1 negatively modulates mouse sonic hedgehog signal transduction and affects retrograde intraflagellar transport in cilia.</title>
        <authorList>
            <person name="Tran P.V."/>
            <person name="Haycraft C.J."/>
            <person name="Besschetnova T.Y."/>
            <person name="Turbe-Doan A."/>
            <person name="Stottmann R.W."/>
            <person name="Herron B.J."/>
            <person name="Chesebro A.L."/>
            <person name="Qiu H."/>
            <person name="Scherz P.J."/>
            <person name="Shah J.V."/>
            <person name="Yoder B.K."/>
            <person name="Beier D.R."/>
        </authorList>
    </citation>
    <scope>NUCLEOTIDE SEQUENCE [MRNA]</scope>
    <scope>FUNCTION</scope>
    <scope>SUBCELLULAR LOCATION</scope>
    <scope>DEVELOPMENTAL STAGE</scope>
    <source>
        <strain>A/J</strain>
    </source>
</reference>
<reference key="2">
    <citation type="journal article" date="2009" name="PLoS Biol.">
        <title>Lineage-specific biology revealed by a finished genome assembly of the mouse.</title>
        <authorList>
            <person name="Church D.M."/>
            <person name="Goodstadt L."/>
            <person name="Hillier L.W."/>
            <person name="Zody M.C."/>
            <person name="Goldstein S."/>
            <person name="She X."/>
            <person name="Bult C.J."/>
            <person name="Agarwala R."/>
            <person name="Cherry J.L."/>
            <person name="DiCuccio M."/>
            <person name="Hlavina W."/>
            <person name="Kapustin Y."/>
            <person name="Meric P."/>
            <person name="Maglott D."/>
            <person name="Birtle Z."/>
            <person name="Marques A.C."/>
            <person name="Graves T."/>
            <person name="Zhou S."/>
            <person name="Teague B."/>
            <person name="Potamousis K."/>
            <person name="Churas C."/>
            <person name="Place M."/>
            <person name="Herschleb J."/>
            <person name="Runnheim R."/>
            <person name="Forrest D."/>
            <person name="Amos-Landgraf J."/>
            <person name="Schwartz D.C."/>
            <person name="Cheng Z."/>
            <person name="Lindblad-Toh K."/>
            <person name="Eichler E.E."/>
            <person name="Ponting C.P."/>
        </authorList>
    </citation>
    <scope>NUCLEOTIDE SEQUENCE [LARGE SCALE GENOMIC DNA]</scope>
    <source>
        <strain>C57BL/6J</strain>
    </source>
</reference>
<reference key="3">
    <citation type="journal article" date="2005" name="Science">
        <title>The transcriptional landscape of the mammalian genome.</title>
        <authorList>
            <person name="Carninci P."/>
            <person name="Kasukawa T."/>
            <person name="Katayama S."/>
            <person name="Gough J."/>
            <person name="Frith M.C."/>
            <person name="Maeda N."/>
            <person name="Oyama R."/>
            <person name="Ravasi T."/>
            <person name="Lenhard B."/>
            <person name="Wells C."/>
            <person name="Kodzius R."/>
            <person name="Shimokawa K."/>
            <person name="Bajic V.B."/>
            <person name="Brenner S.E."/>
            <person name="Batalov S."/>
            <person name="Forrest A.R."/>
            <person name="Zavolan M."/>
            <person name="Davis M.J."/>
            <person name="Wilming L.G."/>
            <person name="Aidinis V."/>
            <person name="Allen J.E."/>
            <person name="Ambesi-Impiombato A."/>
            <person name="Apweiler R."/>
            <person name="Aturaliya R.N."/>
            <person name="Bailey T.L."/>
            <person name="Bansal M."/>
            <person name="Baxter L."/>
            <person name="Beisel K.W."/>
            <person name="Bersano T."/>
            <person name="Bono H."/>
            <person name="Chalk A.M."/>
            <person name="Chiu K.P."/>
            <person name="Choudhary V."/>
            <person name="Christoffels A."/>
            <person name="Clutterbuck D.R."/>
            <person name="Crowe M.L."/>
            <person name="Dalla E."/>
            <person name="Dalrymple B.P."/>
            <person name="de Bono B."/>
            <person name="Della Gatta G."/>
            <person name="di Bernardo D."/>
            <person name="Down T."/>
            <person name="Engstrom P."/>
            <person name="Fagiolini M."/>
            <person name="Faulkner G."/>
            <person name="Fletcher C.F."/>
            <person name="Fukushima T."/>
            <person name="Furuno M."/>
            <person name="Futaki S."/>
            <person name="Gariboldi M."/>
            <person name="Georgii-Hemming P."/>
            <person name="Gingeras T.R."/>
            <person name="Gojobori T."/>
            <person name="Green R.E."/>
            <person name="Gustincich S."/>
            <person name="Harbers M."/>
            <person name="Hayashi Y."/>
            <person name="Hensch T.K."/>
            <person name="Hirokawa N."/>
            <person name="Hill D."/>
            <person name="Huminiecki L."/>
            <person name="Iacono M."/>
            <person name="Ikeo K."/>
            <person name="Iwama A."/>
            <person name="Ishikawa T."/>
            <person name="Jakt M."/>
            <person name="Kanapin A."/>
            <person name="Katoh M."/>
            <person name="Kawasawa Y."/>
            <person name="Kelso J."/>
            <person name="Kitamura H."/>
            <person name="Kitano H."/>
            <person name="Kollias G."/>
            <person name="Krishnan S.P."/>
            <person name="Kruger A."/>
            <person name="Kummerfeld S.K."/>
            <person name="Kurochkin I.V."/>
            <person name="Lareau L.F."/>
            <person name="Lazarevic D."/>
            <person name="Lipovich L."/>
            <person name="Liu J."/>
            <person name="Liuni S."/>
            <person name="McWilliam S."/>
            <person name="Madan Babu M."/>
            <person name="Madera M."/>
            <person name="Marchionni L."/>
            <person name="Matsuda H."/>
            <person name="Matsuzawa S."/>
            <person name="Miki H."/>
            <person name="Mignone F."/>
            <person name="Miyake S."/>
            <person name="Morris K."/>
            <person name="Mottagui-Tabar S."/>
            <person name="Mulder N."/>
            <person name="Nakano N."/>
            <person name="Nakauchi H."/>
            <person name="Ng P."/>
            <person name="Nilsson R."/>
            <person name="Nishiguchi S."/>
            <person name="Nishikawa S."/>
            <person name="Nori F."/>
            <person name="Ohara O."/>
            <person name="Okazaki Y."/>
            <person name="Orlando V."/>
            <person name="Pang K.C."/>
            <person name="Pavan W.J."/>
            <person name="Pavesi G."/>
            <person name="Pesole G."/>
            <person name="Petrovsky N."/>
            <person name="Piazza S."/>
            <person name="Reed J."/>
            <person name="Reid J.F."/>
            <person name="Ring B.Z."/>
            <person name="Ringwald M."/>
            <person name="Rost B."/>
            <person name="Ruan Y."/>
            <person name="Salzberg S.L."/>
            <person name="Sandelin A."/>
            <person name="Schneider C."/>
            <person name="Schoenbach C."/>
            <person name="Sekiguchi K."/>
            <person name="Semple C.A."/>
            <person name="Seno S."/>
            <person name="Sessa L."/>
            <person name="Sheng Y."/>
            <person name="Shibata Y."/>
            <person name="Shimada H."/>
            <person name="Shimada K."/>
            <person name="Silva D."/>
            <person name="Sinclair B."/>
            <person name="Sperling S."/>
            <person name="Stupka E."/>
            <person name="Sugiura K."/>
            <person name="Sultana R."/>
            <person name="Takenaka Y."/>
            <person name="Taki K."/>
            <person name="Tammoja K."/>
            <person name="Tan S.L."/>
            <person name="Tang S."/>
            <person name="Taylor M.S."/>
            <person name="Tegner J."/>
            <person name="Teichmann S.A."/>
            <person name="Ueda H.R."/>
            <person name="van Nimwegen E."/>
            <person name="Verardo R."/>
            <person name="Wei C.L."/>
            <person name="Yagi K."/>
            <person name="Yamanishi H."/>
            <person name="Zabarovsky E."/>
            <person name="Zhu S."/>
            <person name="Zimmer A."/>
            <person name="Hide W."/>
            <person name="Bult C."/>
            <person name="Grimmond S.M."/>
            <person name="Teasdale R.D."/>
            <person name="Liu E.T."/>
            <person name="Brusic V."/>
            <person name="Quackenbush J."/>
            <person name="Wahlestedt C."/>
            <person name="Mattick J.S."/>
            <person name="Hume D.A."/>
            <person name="Kai C."/>
            <person name="Sasaki D."/>
            <person name="Tomaru Y."/>
            <person name="Fukuda S."/>
            <person name="Kanamori-Katayama M."/>
            <person name="Suzuki M."/>
            <person name="Aoki J."/>
            <person name="Arakawa T."/>
            <person name="Iida J."/>
            <person name="Imamura K."/>
            <person name="Itoh M."/>
            <person name="Kato T."/>
            <person name="Kawaji H."/>
            <person name="Kawagashira N."/>
            <person name="Kawashima T."/>
            <person name="Kojima M."/>
            <person name="Kondo S."/>
            <person name="Konno H."/>
            <person name="Nakano K."/>
            <person name="Ninomiya N."/>
            <person name="Nishio T."/>
            <person name="Okada M."/>
            <person name="Plessy C."/>
            <person name="Shibata K."/>
            <person name="Shiraki T."/>
            <person name="Suzuki S."/>
            <person name="Tagami M."/>
            <person name="Waki K."/>
            <person name="Watahiki A."/>
            <person name="Okamura-Oho Y."/>
            <person name="Suzuki H."/>
            <person name="Kawai J."/>
            <person name="Hayashizaki Y."/>
        </authorList>
    </citation>
    <scope>NUCLEOTIDE SEQUENCE [LARGE SCALE MRNA] OF 667-1315</scope>
    <source>
        <strain>C57BL/6J</strain>
        <tissue>Brain</tissue>
    </source>
</reference>
<reference key="4">
    <citation type="journal article" date="2004" name="DNA Res.">
        <title>Prediction of the coding sequences of mouse homologues of KIAA gene: IV. The complete nucleotide sequences of 500 mouse KIAA-homologous cDNAs identified by screening of terminal sequences of cDNA clones randomly sampled from size-fractionated libraries.</title>
        <authorList>
            <person name="Okazaki N."/>
            <person name="Kikuno R."/>
            <person name="Ohara R."/>
            <person name="Inamoto S."/>
            <person name="Koseki H."/>
            <person name="Hiraoka S."/>
            <person name="Saga Y."/>
            <person name="Seino S."/>
            <person name="Nishimura M."/>
            <person name="Kaisho T."/>
            <person name="Hoshino K."/>
            <person name="Kitamura H."/>
            <person name="Nagase T."/>
            <person name="Ohara O."/>
            <person name="Koga H."/>
        </authorList>
    </citation>
    <scope>NUCLEOTIDE SEQUENCE [LARGE SCALE MRNA] OF 994-1315</scope>
    <source>
        <tissue>Embryonic tail</tissue>
    </source>
</reference>
<reference key="5">
    <citation type="journal article" date="2010" name="Cell">
        <title>A tissue-specific atlas of mouse protein phosphorylation and expression.</title>
        <authorList>
            <person name="Huttlin E.L."/>
            <person name="Jedrychowski M.P."/>
            <person name="Elias J.E."/>
            <person name="Goswami T."/>
            <person name="Rad R."/>
            <person name="Beausoleil S.A."/>
            <person name="Villen J."/>
            <person name="Haas W."/>
            <person name="Sowa M.E."/>
            <person name="Gygi S.P."/>
        </authorList>
    </citation>
    <scope>IDENTIFICATION BY MASS SPECTROMETRY [LARGE SCALE ANALYSIS]</scope>
    <source>
        <tissue>Kidney</tissue>
        <tissue>Testis</tissue>
    </source>
</reference>
<reference key="6">
    <citation type="journal article" date="2015" name="PLoS ONE">
        <title>Characterization of tetratricopeptide repeat-containing proteins critical for cilia formation and function.</title>
        <authorList>
            <person name="Xu Y."/>
            <person name="Cao J."/>
            <person name="Huang S."/>
            <person name="Feng D."/>
            <person name="Zhang W."/>
            <person name="Zhu X."/>
            <person name="Yan X."/>
        </authorList>
    </citation>
    <scope>INTERACTION WITH TTC25</scope>
</reference>
<organism>
    <name type="scientific">Mus musculus</name>
    <name type="common">Mouse</name>
    <dbReference type="NCBI Taxonomy" id="10090"/>
    <lineage>
        <taxon>Eukaryota</taxon>
        <taxon>Metazoa</taxon>
        <taxon>Chordata</taxon>
        <taxon>Craniata</taxon>
        <taxon>Vertebrata</taxon>
        <taxon>Euteleostomi</taxon>
        <taxon>Mammalia</taxon>
        <taxon>Eutheria</taxon>
        <taxon>Euarchontoglires</taxon>
        <taxon>Glires</taxon>
        <taxon>Rodentia</taxon>
        <taxon>Myomorpha</taxon>
        <taxon>Muroidea</taxon>
        <taxon>Muridae</taxon>
        <taxon>Murinae</taxon>
        <taxon>Mus</taxon>
        <taxon>Mus</taxon>
    </lineage>
</organism>
<dbReference type="EMBL" id="DQ011164">
    <property type="protein sequence ID" value="AAY79164.1"/>
    <property type="molecule type" value="mRNA"/>
</dbReference>
<dbReference type="EMBL" id="AL844526">
    <property type="status" value="NOT_ANNOTATED_CDS"/>
    <property type="molecule type" value="Genomic_DNA"/>
</dbReference>
<dbReference type="EMBL" id="AL928586">
    <property type="status" value="NOT_ANNOTATED_CDS"/>
    <property type="molecule type" value="Genomic_DNA"/>
</dbReference>
<dbReference type="EMBL" id="AK132240">
    <property type="protein sequence ID" value="BAE21052.1"/>
    <property type="molecule type" value="mRNA"/>
</dbReference>
<dbReference type="EMBL" id="AK173320">
    <property type="protein sequence ID" value="BAD32598.1"/>
    <property type="status" value="ALT_SEQ"/>
    <property type="molecule type" value="mRNA"/>
</dbReference>
<dbReference type="CCDS" id="CCDS16076.1"/>
<dbReference type="RefSeq" id="NP_001041069.1">
    <property type="nucleotide sequence ID" value="NM_001047604.3"/>
</dbReference>
<dbReference type="SMR" id="Q0HA38"/>
<dbReference type="BioGRID" id="216179">
    <property type="interactions" value="3"/>
</dbReference>
<dbReference type="ComplexPortal" id="CPX-5027">
    <property type="entry name" value="Intraflagellar transport complex A"/>
</dbReference>
<dbReference type="FunCoup" id="Q0HA38">
    <property type="interactions" value="899"/>
</dbReference>
<dbReference type="STRING" id="10090.ENSMUSP00000099779"/>
<dbReference type="GlyGen" id="Q0HA38">
    <property type="glycosylation" value="2 sites, 1 N-linked glycan (1 site), 1 O-linked glycan (1 site)"/>
</dbReference>
<dbReference type="iPTMnet" id="Q0HA38"/>
<dbReference type="PhosphoSitePlus" id="Q0HA38"/>
<dbReference type="SwissPalm" id="Q0HA38"/>
<dbReference type="PaxDb" id="10090-ENSMUSP00000099779"/>
<dbReference type="ProteomicsDB" id="300145"/>
<dbReference type="Pumba" id="Q0HA38"/>
<dbReference type="Antibodypedia" id="47994">
    <property type="antibodies" value="46 antibodies from 8 providers"/>
</dbReference>
<dbReference type="Ensembl" id="ENSMUST00000102718.10">
    <property type="protein sequence ID" value="ENSMUSP00000099779.4"/>
    <property type="gene ID" value="ENSMUSG00000034848.18"/>
</dbReference>
<dbReference type="GeneID" id="73668"/>
<dbReference type="KEGG" id="mmu:73668"/>
<dbReference type="UCSC" id="uc008jwv.2">
    <property type="organism name" value="mouse"/>
</dbReference>
<dbReference type="AGR" id="MGI:1920918"/>
<dbReference type="CTD" id="79809"/>
<dbReference type="MGI" id="MGI:1920918">
    <property type="gene designation" value="Ttc21b"/>
</dbReference>
<dbReference type="VEuPathDB" id="HostDB:ENSMUSG00000034848"/>
<dbReference type="eggNOG" id="ENOG502QQAB">
    <property type="taxonomic scope" value="Eukaryota"/>
</dbReference>
<dbReference type="GeneTree" id="ENSGT00390000005979"/>
<dbReference type="HOGENOM" id="CLU_006149_0_0_1"/>
<dbReference type="InParanoid" id="Q0HA38"/>
<dbReference type="OMA" id="NATCVRA"/>
<dbReference type="OrthoDB" id="10259630at2759"/>
<dbReference type="PhylomeDB" id="Q0HA38"/>
<dbReference type="TreeFam" id="TF314664"/>
<dbReference type="Reactome" id="R-MMU-5610787">
    <property type="pathway name" value="Hedgehog 'off' state"/>
</dbReference>
<dbReference type="Reactome" id="R-MMU-5620924">
    <property type="pathway name" value="Intraflagellar transport"/>
</dbReference>
<dbReference type="BioGRID-ORCS" id="73668">
    <property type="hits" value="5 hits in 77 CRISPR screens"/>
</dbReference>
<dbReference type="CD-CODE" id="DE1E139C">
    <property type="entry name" value="Chromatoid body"/>
</dbReference>
<dbReference type="ChiTaRS" id="Ttc21b">
    <property type="organism name" value="mouse"/>
</dbReference>
<dbReference type="PRO" id="PR:Q0HA38"/>
<dbReference type="Proteomes" id="UP000000589">
    <property type="component" value="Chromosome 2"/>
</dbReference>
<dbReference type="RNAct" id="Q0HA38">
    <property type="molecule type" value="protein"/>
</dbReference>
<dbReference type="Bgee" id="ENSMUSG00000034848">
    <property type="expression patterns" value="Expressed in spermatocyte and 220 other cell types or tissues"/>
</dbReference>
<dbReference type="ExpressionAtlas" id="Q0HA38">
    <property type="expression patterns" value="baseline and differential"/>
</dbReference>
<dbReference type="GO" id="GO:0005929">
    <property type="term" value="C:cilium"/>
    <property type="evidence" value="ECO:0000303"/>
    <property type="project" value="ComplexPortal"/>
</dbReference>
<dbReference type="GO" id="GO:0005737">
    <property type="term" value="C:cytoplasm"/>
    <property type="evidence" value="ECO:0007669"/>
    <property type="project" value="UniProtKB-KW"/>
</dbReference>
<dbReference type="GO" id="GO:0005856">
    <property type="term" value="C:cytoskeleton"/>
    <property type="evidence" value="ECO:0007669"/>
    <property type="project" value="UniProtKB-KW"/>
</dbReference>
<dbReference type="GO" id="GO:0030991">
    <property type="term" value="C:intraciliary transport particle A"/>
    <property type="evidence" value="ECO:0000314"/>
    <property type="project" value="MGI"/>
</dbReference>
<dbReference type="GO" id="GO:0003682">
    <property type="term" value="F:chromatin binding"/>
    <property type="evidence" value="ECO:0000314"/>
    <property type="project" value="MGI"/>
</dbReference>
<dbReference type="GO" id="GO:0060020">
    <property type="term" value="P:Bergmann glial cell differentiation"/>
    <property type="evidence" value="ECO:0000315"/>
    <property type="project" value="MGI"/>
</dbReference>
<dbReference type="GO" id="GO:0021702">
    <property type="term" value="P:cerebellar Purkinje cell differentiation"/>
    <property type="evidence" value="ECO:0000315"/>
    <property type="project" value="MGI"/>
</dbReference>
<dbReference type="GO" id="GO:0021549">
    <property type="term" value="P:cerebellum development"/>
    <property type="evidence" value="ECO:0000315"/>
    <property type="project" value="MGI"/>
</dbReference>
<dbReference type="GO" id="GO:0060271">
    <property type="term" value="P:cilium assembly"/>
    <property type="evidence" value="ECO:0000303"/>
    <property type="project" value="ComplexPortal"/>
</dbReference>
<dbReference type="GO" id="GO:0030900">
    <property type="term" value="P:forebrain development"/>
    <property type="evidence" value="ECO:0000315"/>
    <property type="project" value="MGI"/>
</dbReference>
<dbReference type="GO" id="GO:0021798">
    <property type="term" value="P:forebrain dorsal/ventral pattern formation"/>
    <property type="evidence" value="ECO:0000315"/>
    <property type="project" value="MGI"/>
</dbReference>
<dbReference type="GO" id="GO:0035721">
    <property type="term" value="P:intraciliary retrograde transport"/>
    <property type="evidence" value="ECO:0000315"/>
    <property type="project" value="MGI"/>
</dbReference>
<dbReference type="GO" id="GO:1903999">
    <property type="term" value="P:negative regulation of eating behavior"/>
    <property type="evidence" value="ECO:0000315"/>
    <property type="project" value="MGI"/>
</dbReference>
<dbReference type="GO" id="GO:0090263">
    <property type="term" value="P:positive regulation of canonical Wnt signaling pathway"/>
    <property type="evidence" value="ECO:0000315"/>
    <property type="project" value="MGI"/>
</dbReference>
<dbReference type="GO" id="GO:0010628">
    <property type="term" value="P:positive regulation of gene expression"/>
    <property type="evidence" value="ECO:0000315"/>
    <property type="project" value="MGI"/>
</dbReference>
<dbReference type="GO" id="GO:0097499">
    <property type="term" value="P:protein localization to non-motile cilium"/>
    <property type="evidence" value="ECO:0000315"/>
    <property type="project" value="MGI"/>
</dbReference>
<dbReference type="GO" id="GO:1905799">
    <property type="term" value="P:regulation of intraciliary retrograde transport"/>
    <property type="evidence" value="ECO:0000250"/>
    <property type="project" value="UniProtKB"/>
</dbReference>
<dbReference type="GO" id="GO:0008589">
    <property type="term" value="P:regulation of smoothened signaling pathway"/>
    <property type="evidence" value="ECO:0000315"/>
    <property type="project" value="MGI"/>
</dbReference>
<dbReference type="GO" id="GO:0006357">
    <property type="term" value="P:regulation of transcription by RNA polymerase II"/>
    <property type="evidence" value="ECO:0000266"/>
    <property type="project" value="MGI"/>
</dbReference>
<dbReference type="GO" id="GO:0007224">
    <property type="term" value="P:smoothened signaling pathway"/>
    <property type="evidence" value="ECO:0000315"/>
    <property type="project" value="MGI"/>
</dbReference>
<dbReference type="GO" id="GO:0021591">
    <property type="term" value="P:ventricular system development"/>
    <property type="evidence" value="ECO:0000315"/>
    <property type="project" value="MGI"/>
</dbReference>
<dbReference type="FunFam" id="1.25.40.10:FF:000548">
    <property type="entry name" value="Tetratricopeptide repeat domain 21A"/>
    <property type="match status" value="1"/>
</dbReference>
<dbReference type="FunFam" id="1.25.40.10:FF:000219">
    <property type="entry name" value="Tetratricopeptide repeat domain 21B"/>
    <property type="match status" value="1"/>
</dbReference>
<dbReference type="FunFam" id="1.25.40.10:FF:000245">
    <property type="entry name" value="Tetratricopeptide repeat domain 21B"/>
    <property type="match status" value="1"/>
</dbReference>
<dbReference type="FunFam" id="1.25.40.10:FF:000493">
    <property type="entry name" value="Tetratricopeptide repeat domain 21B"/>
    <property type="match status" value="1"/>
</dbReference>
<dbReference type="Gene3D" id="1.25.40.10">
    <property type="entry name" value="Tetratricopeptide repeat domain"/>
    <property type="match status" value="5"/>
</dbReference>
<dbReference type="InterPro" id="IPR056832">
    <property type="entry name" value="ARM_TT21_2nd"/>
</dbReference>
<dbReference type="InterPro" id="IPR056836">
    <property type="entry name" value="ARM_TT21_4th"/>
</dbReference>
<dbReference type="InterPro" id="IPR056835">
    <property type="entry name" value="ARM_TT21_5th"/>
</dbReference>
<dbReference type="InterPro" id="IPR056834">
    <property type="entry name" value="ARM_TT21_C"/>
</dbReference>
<dbReference type="InterPro" id="IPR056833">
    <property type="entry name" value="ARM_TT21_N"/>
</dbReference>
<dbReference type="InterPro" id="IPR011990">
    <property type="entry name" value="TPR-like_helical_dom_sf"/>
</dbReference>
<dbReference type="InterPro" id="IPR019734">
    <property type="entry name" value="TPR_rpt"/>
</dbReference>
<dbReference type="InterPro" id="IPR040364">
    <property type="entry name" value="TTC21A/TTC21B"/>
</dbReference>
<dbReference type="PANTHER" id="PTHR14699">
    <property type="entry name" value="STI2 PROTEIN-RELATED"/>
    <property type="match status" value="1"/>
</dbReference>
<dbReference type="PANTHER" id="PTHR14699:SF1">
    <property type="entry name" value="TETRATRICOPEPTIDE REPEAT PROTEIN 21B"/>
    <property type="match status" value="1"/>
</dbReference>
<dbReference type="Pfam" id="PF25058">
    <property type="entry name" value="ARM_TT21"/>
    <property type="match status" value="1"/>
</dbReference>
<dbReference type="Pfam" id="PF25060">
    <property type="entry name" value="ARM_TT21_2nd"/>
    <property type="match status" value="1"/>
</dbReference>
<dbReference type="Pfam" id="PF25068">
    <property type="entry name" value="ARM_TT21_4th"/>
    <property type="match status" value="1"/>
</dbReference>
<dbReference type="Pfam" id="PF25064">
    <property type="entry name" value="ARM_TT21_5th"/>
    <property type="match status" value="1"/>
</dbReference>
<dbReference type="Pfam" id="PF25063">
    <property type="entry name" value="ARM_TT21_C"/>
    <property type="match status" value="1"/>
</dbReference>
<dbReference type="Pfam" id="PF25062">
    <property type="entry name" value="ARM_TT21_N"/>
    <property type="match status" value="1"/>
</dbReference>
<dbReference type="Pfam" id="PF13181">
    <property type="entry name" value="TPR_8"/>
    <property type="match status" value="1"/>
</dbReference>
<dbReference type="SMART" id="SM00028">
    <property type="entry name" value="TPR"/>
    <property type="match status" value="15"/>
</dbReference>
<dbReference type="SUPFAM" id="SSF81901">
    <property type="entry name" value="HCP-like"/>
    <property type="match status" value="1"/>
</dbReference>
<dbReference type="SUPFAM" id="SSF48452">
    <property type="entry name" value="TPR-like"/>
    <property type="match status" value="4"/>
</dbReference>
<dbReference type="PROSITE" id="PS50005">
    <property type="entry name" value="TPR"/>
    <property type="match status" value="11"/>
</dbReference>
<dbReference type="PROSITE" id="PS50293">
    <property type="entry name" value="TPR_REGION"/>
    <property type="match status" value="4"/>
</dbReference>
<accession>Q0HA38</accession>
<accession>Q3V1U7</accession>
<accession>Q69Z46</accession>
<name>TT21B_MOUSE</name>
<keyword id="KW-0966">Cell projection</keyword>
<keyword id="KW-0969">Cilium</keyword>
<keyword id="KW-0963">Cytoplasm</keyword>
<keyword id="KW-0206">Cytoskeleton</keyword>
<keyword id="KW-1185">Reference proteome</keyword>
<keyword id="KW-0677">Repeat</keyword>
<keyword id="KW-0802">TPR repeat</keyword>
<feature type="chain" id="PRO_0000291918" description="Tetratricopeptide repeat protein 21B">
    <location>
        <begin position="1"/>
        <end position="1315"/>
    </location>
</feature>
<feature type="repeat" description="TPR 1">
    <location>
        <begin position="108"/>
        <end position="141"/>
    </location>
</feature>
<feature type="repeat" description="TPR 2">
    <location>
        <begin position="145"/>
        <end position="178"/>
    </location>
</feature>
<feature type="repeat" description="TPR 3">
    <location>
        <begin position="192"/>
        <end position="225"/>
    </location>
</feature>
<feature type="repeat" description="TPR 4">
    <location>
        <begin position="285"/>
        <end position="323"/>
    </location>
</feature>
<feature type="repeat" description="TPR 5">
    <location>
        <begin position="324"/>
        <end position="357"/>
    </location>
</feature>
<feature type="repeat" description="TPR 6">
    <location>
        <begin position="492"/>
        <end position="525"/>
    </location>
</feature>
<feature type="repeat" description="TPR 7">
    <location>
        <begin position="563"/>
        <end position="596"/>
    </location>
</feature>
<feature type="repeat" description="TPR 8">
    <location>
        <begin position="616"/>
        <end position="649"/>
    </location>
</feature>
<feature type="repeat" description="TPR 9">
    <location>
        <begin position="721"/>
        <end position="754"/>
    </location>
</feature>
<feature type="repeat" description="TPR 10">
    <location>
        <begin position="756"/>
        <end position="788"/>
    </location>
</feature>
<feature type="repeat" description="TPR 11">
    <location>
        <begin position="790"/>
        <end position="821"/>
    </location>
</feature>
<feature type="repeat" description="TPR 12">
    <location>
        <begin position="830"/>
        <end position="863"/>
    </location>
</feature>
<feature type="repeat" description="TPR 13">
    <location>
        <begin position="883"/>
        <end position="916"/>
    </location>
</feature>
<feature type="repeat" description="TPR 14">
    <location>
        <begin position="918"/>
        <end position="950"/>
    </location>
</feature>
<feature type="repeat" description="TPR 15">
    <location>
        <begin position="951"/>
        <end position="984"/>
    </location>
</feature>
<feature type="repeat" description="TPR 16">
    <location>
        <begin position="1022"/>
        <end position="1055"/>
    </location>
</feature>
<feature type="repeat" description="TPR 17">
    <location>
        <begin position="1196"/>
        <end position="1229"/>
    </location>
</feature>
<feature type="repeat" description="TPR 18">
    <location>
        <begin position="1231"/>
        <end position="1263"/>
    </location>
</feature>
<feature type="repeat" description="TPR 19">
    <location>
        <begin position="1265"/>
        <end position="1298"/>
    </location>
</feature>